<accession>Q0MQ96</accession>
<name>NDUA3_PANTR</name>
<sequence length="84" mass="9279">MAARVGAFLKNAWDKEPVLVVSFVVGGLAVILPPLSPYFKYSVMINKATPYNYPVPVRDDGNMPDVPSHPQDPQGPSLEWLKKL</sequence>
<dbReference type="EMBL" id="DQ885738">
    <property type="protein sequence ID" value="ABH12247.1"/>
    <property type="molecule type" value="mRNA"/>
</dbReference>
<dbReference type="RefSeq" id="NP_001238904.1">
    <property type="nucleotide sequence ID" value="NM_001251975.1"/>
</dbReference>
<dbReference type="RefSeq" id="XP_016792292.1">
    <property type="nucleotide sequence ID" value="XM_016936803.1"/>
</dbReference>
<dbReference type="SMR" id="Q0MQ96"/>
<dbReference type="FunCoup" id="Q0MQ96">
    <property type="interactions" value="712"/>
</dbReference>
<dbReference type="STRING" id="9598.ENSPTRP00000048498"/>
<dbReference type="PaxDb" id="9598-ENSPTRP00000048498"/>
<dbReference type="Ensembl" id="ENSPTRT00000055898.5">
    <property type="protein sequence ID" value="ENSPTRP00000048498.4"/>
    <property type="gene ID" value="ENSPTRG00000028890.5"/>
</dbReference>
<dbReference type="Ensembl" id="ENSPTRT00000091275.1">
    <property type="protein sequence ID" value="ENSPTRP00000093938.1"/>
    <property type="gene ID" value="ENSPTRG00000045461.1"/>
</dbReference>
<dbReference type="GeneID" id="100614219"/>
<dbReference type="KEGG" id="ptr:100614219"/>
<dbReference type="CTD" id="4696"/>
<dbReference type="VGNC" id="VGNC:11198">
    <property type="gene designation" value="NDUFA3"/>
</dbReference>
<dbReference type="eggNOG" id="ENOG502S4RS">
    <property type="taxonomic scope" value="Eukaryota"/>
</dbReference>
<dbReference type="GeneTree" id="ENSGT00390000004322"/>
<dbReference type="HOGENOM" id="CLU_171491_0_0_1"/>
<dbReference type="InParanoid" id="Q0MQ96"/>
<dbReference type="OMA" id="MINQAVP"/>
<dbReference type="TreeFam" id="TF333021"/>
<dbReference type="Proteomes" id="UP000002277">
    <property type="component" value="Chromosome 19"/>
</dbReference>
<dbReference type="Bgee" id="ENSPTRG00000028890">
    <property type="expression patterns" value="Expressed in hindlimb stylopod muscle and 21 other cell types or tissues"/>
</dbReference>
<dbReference type="GO" id="GO:0005743">
    <property type="term" value="C:mitochondrial inner membrane"/>
    <property type="evidence" value="ECO:0007669"/>
    <property type="project" value="UniProtKB-SubCell"/>
</dbReference>
<dbReference type="GO" id="GO:0045271">
    <property type="term" value="C:respiratory chain complex I"/>
    <property type="evidence" value="ECO:0000250"/>
    <property type="project" value="UniProtKB"/>
</dbReference>
<dbReference type="CDD" id="cd22902">
    <property type="entry name" value="NDUFA3"/>
    <property type="match status" value="1"/>
</dbReference>
<dbReference type="InterPro" id="IPR026626">
    <property type="entry name" value="NDUFA3"/>
</dbReference>
<dbReference type="PANTHER" id="PTHR15221">
    <property type="entry name" value="NADH DEHYDROGENASE [UBIQUINONE] 1 ALPHA SUBCOMPLEX SUBUNIT 3"/>
    <property type="match status" value="1"/>
</dbReference>
<dbReference type="PANTHER" id="PTHR15221:SF0">
    <property type="entry name" value="NADH DEHYDROGENASE [UBIQUINONE] 1 ALPHA SUBCOMPLEX SUBUNIT 3"/>
    <property type="match status" value="1"/>
</dbReference>
<dbReference type="Pfam" id="PF14987">
    <property type="entry name" value="NADHdh_A3"/>
    <property type="match status" value="1"/>
</dbReference>
<evidence type="ECO:0000250" key="1">
    <source>
        <dbReference type="UniProtKB" id="O95167"/>
    </source>
</evidence>
<evidence type="ECO:0000250" key="2">
    <source>
        <dbReference type="UniProtKB" id="Q02371"/>
    </source>
</evidence>
<evidence type="ECO:0000255" key="3"/>
<evidence type="ECO:0000256" key="4">
    <source>
        <dbReference type="SAM" id="MobiDB-lite"/>
    </source>
</evidence>
<evidence type="ECO:0000305" key="5"/>
<proteinExistence type="inferred from homology"/>
<reference key="1">
    <citation type="journal article" date="2006" name="Gene">
        <title>Adaptive selection of mitochondrial complex I subunits during primate radiation.</title>
        <authorList>
            <person name="Mishmar D."/>
            <person name="Ruiz-Pesini E."/>
            <person name="Mondragon-Palomino M."/>
            <person name="Procaccio V."/>
            <person name="Gaut B."/>
            <person name="Wallace D.C."/>
        </authorList>
    </citation>
    <scope>NUCLEOTIDE SEQUENCE [MRNA]</scope>
</reference>
<protein>
    <recommendedName>
        <fullName>NADH dehydrogenase [ubiquinone] 1 alpha subcomplex subunit 3</fullName>
    </recommendedName>
    <alternativeName>
        <fullName>Complex I-B9</fullName>
        <shortName>CI-B9</shortName>
    </alternativeName>
    <alternativeName>
        <fullName>NADH-ubiquinone oxidoreductase B9 subunit</fullName>
    </alternativeName>
</protein>
<keyword id="KW-0007">Acetylation</keyword>
<keyword id="KW-0249">Electron transport</keyword>
<keyword id="KW-0472">Membrane</keyword>
<keyword id="KW-0496">Mitochondrion</keyword>
<keyword id="KW-0999">Mitochondrion inner membrane</keyword>
<keyword id="KW-1185">Reference proteome</keyword>
<keyword id="KW-0679">Respiratory chain</keyword>
<keyword id="KW-0812">Transmembrane</keyword>
<keyword id="KW-1133">Transmembrane helix</keyword>
<keyword id="KW-0813">Transport</keyword>
<gene>
    <name type="primary">NDUFA3</name>
</gene>
<feature type="initiator methionine" description="Removed" evidence="2">
    <location>
        <position position="1"/>
    </location>
</feature>
<feature type="chain" id="PRO_0000251801" description="NADH dehydrogenase [ubiquinone] 1 alpha subcomplex subunit 3">
    <location>
        <begin position="2"/>
        <end position="84"/>
    </location>
</feature>
<feature type="transmembrane region" description="Helical" evidence="3">
    <location>
        <begin position="19"/>
        <end position="39"/>
    </location>
</feature>
<feature type="region of interest" description="Disordered" evidence="4">
    <location>
        <begin position="56"/>
        <end position="84"/>
    </location>
</feature>
<feature type="modified residue" description="N-acetylalanine" evidence="2">
    <location>
        <position position="2"/>
    </location>
</feature>
<organism>
    <name type="scientific">Pan troglodytes</name>
    <name type="common">Chimpanzee</name>
    <dbReference type="NCBI Taxonomy" id="9598"/>
    <lineage>
        <taxon>Eukaryota</taxon>
        <taxon>Metazoa</taxon>
        <taxon>Chordata</taxon>
        <taxon>Craniata</taxon>
        <taxon>Vertebrata</taxon>
        <taxon>Euteleostomi</taxon>
        <taxon>Mammalia</taxon>
        <taxon>Eutheria</taxon>
        <taxon>Euarchontoglires</taxon>
        <taxon>Primates</taxon>
        <taxon>Haplorrhini</taxon>
        <taxon>Catarrhini</taxon>
        <taxon>Hominidae</taxon>
        <taxon>Pan</taxon>
    </lineage>
</organism>
<comment type="function">
    <text evidence="1">Accessory subunit of the mitochondrial membrane respiratory chain NADH dehydrogenase (Complex I), that is believed not to be involved in catalysis. Complex I functions in the transfer of electrons from NADH to the respiratory chain. The immediate electron acceptor for the enzyme is believed to be ubiquinone.</text>
</comment>
<comment type="subunit">
    <text evidence="1">Complex I is composed of 45 different subunits.</text>
</comment>
<comment type="subcellular location">
    <subcellularLocation>
        <location evidence="1">Mitochondrion inner membrane</location>
        <topology evidence="3">Single-pass membrane protein</topology>
    </subcellularLocation>
</comment>
<comment type="similarity">
    <text evidence="5">Belongs to the complex I NDUFA3 subunit family.</text>
</comment>